<evidence type="ECO:0000255" key="1">
    <source>
        <dbReference type="HAMAP-Rule" id="MF_00057"/>
    </source>
</evidence>
<gene>
    <name evidence="1" type="primary">kdsB</name>
    <name type="ordered locus">VP0984</name>
</gene>
<reference key="1">
    <citation type="journal article" date="2003" name="Lancet">
        <title>Genome sequence of Vibrio parahaemolyticus: a pathogenic mechanism distinct from that of V. cholerae.</title>
        <authorList>
            <person name="Makino K."/>
            <person name="Oshima K."/>
            <person name="Kurokawa K."/>
            <person name="Yokoyama K."/>
            <person name="Uda T."/>
            <person name="Tagomori K."/>
            <person name="Iijima Y."/>
            <person name="Najima M."/>
            <person name="Nakano M."/>
            <person name="Yamashita A."/>
            <person name="Kubota Y."/>
            <person name="Kimura S."/>
            <person name="Yasunaga T."/>
            <person name="Honda T."/>
            <person name="Shinagawa H."/>
            <person name="Hattori M."/>
            <person name="Iida T."/>
        </authorList>
    </citation>
    <scope>NUCLEOTIDE SEQUENCE [LARGE SCALE GENOMIC DNA]</scope>
    <source>
        <strain>RIMD 2210633</strain>
    </source>
</reference>
<protein>
    <recommendedName>
        <fullName evidence="1">3-deoxy-manno-octulosonate cytidylyltransferase</fullName>
        <ecNumber evidence="1">2.7.7.38</ecNumber>
    </recommendedName>
    <alternativeName>
        <fullName evidence="1">CMP-2-keto-3-deoxyoctulosonic acid synthase</fullName>
        <shortName evidence="1">CKS</shortName>
        <shortName evidence="1">CMP-KDO synthase</shortName>
    </alternativeName>
</protein>
<keyword id="KW-0963">Cytoplasm</keyword>
<keyword id="KW-0448">Lipopolysaccharide biosynthesis</keyword>
<keyword id="KW-0548">Nucleotidyltransferase</keyword>
<keyword id="KW-0808">Transferase</keyword>
<accession>Q87R14</accession>
<proteinExistence type="inferred from homology"/>
<name>KDSB_VIBPA</name>
<feature type="chain" id="PRO_0000188518" description="3-deoxy-manno-octulosonate cytidylyltransferase">
    <location>
        <begin position="1"/>
        <end position="251"/>
    </location>
</feature>
<sequence>MSFTVVIPARYSSSRLPGKPLADIGGKPMVQWVYEQAMQAGADDVIIATDDERVSAAVEQFGGKVCMTSPNHESGTERLAEVVEKMAIPADHIIVNVQGDEPLVPPVIIRQVADNLAASDAPMATLAVEIESEDEVFNPNAVKVVADERGYAMYFSRATIPWDRDNFAKQDKAIVNPLMRHIGIYAYRAGFINTYVNWAPSALEQIECLEQLRVLWYGEKIHVAVAKEAPAAGVDTPEDLEAVRAIVAKKA</sequence>
<comment type="function">
    <text evidence="1">Activates KDO (a required 8-carbon sugar) for incorporation into bacterial lipopolysaccharide in Gram-negative bacteria.</text>
</comment>
<comment type="catalytic activity">
    <reaction evidence="1">
        <text>3-deoxy-alpha-D-manno-oct-2-ulosonate + CTP = CMP-3-deoxy-beta-D-manno-octulosonate + diphosphate</text>
        <dbReference type="Rhea" id="RHEA:23448"/>
        <dbReference type="ChEBI" id="CHEBI:33019"/>
        <dbReference type="ChEBI" id="CHEBI:37563"/>
        <dbReference type="ChEBI" id="CHEBI:85986"/>
        <dbReference type="ChEBI" id="CHEBI:85987"/>
        <dbReference type="EC" id="2.7.7.38"/>
    </reaction>
</comment>
<comment type="pathway">
    <text evidence="1">Nucleotide-sugar biosynthesis; CMP-3-deoxy-D-manno-octulosonate biosynthesis; CMP-3-deoxy-D-manno-octulosonate from 3-deoxy-D-manno-octulosonate and CTP: step 1/1.</text>
</comment>
<comment type="pathway">
    <text evidence="1">Bacterial outer membrane biogenesis; lipopolysaccharide biosynthesis.</text>
</comment>
<comment type="subcellular location">
    <subcellularLocation>
        <location evidence="1">Cytoplasm</location>
    </subcellularLocation>
</comment>
<comment type="similarity">
    <text evidence="1">Belongs to the KdsB family.</text>
</comment>
<dbReference type="EC" id="2.7.7.38" evidence="1"/>
<dbReference type="EMBL" id="BA000031">
    <property type="protein sequence ID" value="BAC59247.1"/>
    <property type="molecule type" value="Genomic_DNA"/>
</dbReference>
<dbReference type="RefSeq" id="NP_797363.1">
    <property type="nucleotide sequence ID" value="NC_004603.1"/>
</dbReference>
<dbReference type="RefSeq" id="WP_005456221.1">
    <property type="nucleotide sequence ID" value="NC_004603.1"/>
</dbReference>
<dbReference type="SMR" id="Q87R14"/>
<dbReference type="GeneID" id="1188488"/>
<dbReference type="KEGG" id="vpa:VP0984"/>
<dbReference type="PATRIC" id="fig|223926.6.peg.934"/>
<dbReference type="eggNOG" id="COG1212">
    <property type="taxonomic scope" value="Bacteria"/>
</dbReference>
<dbReference type="HOGENOM" id="CLU_065038_1_0_6"/>
<dbReference type="UniPathway" id="UPA00030"/>
<dbReference type="UniPathway" id="UPA00358">
    <property type="reaction ID" value="UER00476"/>
</dbReference>
<dbReference type="Proteomes" id="UP000002493">
    <property type="component" value="Chromosome 1"/>
</dbReference>
<dbReference type="GO" id="GO:0005829">
    <property type="term" value="C:cytosol"/>
    <property type="evidence" value="ECO:0007669"/>
    <property type="project" value="TreeGrafter"/>
</dbReference>
<dbReference type="GO" id="GO:0008690">
    <property type="term" value="F:3-deoxy-manno-octulosonate cytidylyltransferase activity"/>
    <property type="evidence" value="ECO:0007669"/>
    <property type="project" value="UniProtKB-UniRule"/>
</dbReference>
<dbReference type="GO" id="GO:0033468">
    <property type="term" value="P:CMP-keto-3-deoxy-D-manno-octulosonic acid biosynthetic process"/>
    <property type="evidence" value="ECO:0007669"/>
    <property type="project" value="UniProtKB-UniRule"/>
</dbReference>
<dbReference type="GO" id="GO:0009103">
    <property type="term" value="P:lipopolysaccharide biosynthetic process"/>
    <property type="evidence" value="ECO:0007669"/>
    <property type="project" value="UniProtKB-UniRule"/>
</dbReference>
<dbReference type="CDD" id="cd02517">
    <property type="entry name" value="CMP-KDO-Synthetase"/>
    <property type="match status" value="1"/>
</dbReference>
<dbReference type="FunFam" id="3.90.550.10:FF:000011">
    <property type="entry name" value="3-deoxy-manno-octulosonate cytidylyltransferase"/>
    <property type="match status" value="1"/>
</dbReference>
<dbReference type="Gene3D" id="3.90.550.10">
    <property type="entry name" value="Spore Coat Polysaccharide Biosynthesis Protein SpsA, Chain A"/>
    <property type="match status" value="1"/>
</dbReference>
<dbReference type="HAMAP" id="MF_00057">
    <property type="entry name" value="KdsB"/>
    <property type="match status" value="1"/>
</dbReference>
<dbReference type="InterPro" id="IPR003329">
    <property type="entry name" value="Cytidylyl_trans"/>
</dbReference>
<dbReference type="InterPro" id="IPR004528">
    <property type="entry name" value="KdsB"/>
</dbReference>
<dbReference type="InterPro" id="IPR029044">
    <property type="entry name" value="Nucleotide-diphossugar_trans"/>
</dbReference>
<dbReference type="NCBIfam" id="TIGR00466">
    <property type="entry name" value="kdsB"/>
    <property type="match status" value="1"/>
</dbReference>
<dbReference type="NCBIfam" id="NF003950">
    <property type="entry name" value="PRK05450.1-3"/>
    <property type="match status" value="1"/>
</dbReference>
<dbReference type="NCBIfam" id="NF003952">
    <property type="entry name" value="PRK05450.1-5"/>
    <property type="match status" value="1"/>
</dbReference>
<dbReference type="NCBIfam" id="NF009905">
    <property type="entry name" value="PRK13368.1"/>
    <property type="match status" value="1"/>
</dbReference>
<dbReference type="PANTHER" id="PTHR42866">
    <property type="entry name" value="3-DEOXY-MANNO-OCTULOSONATE CYTIDYLYLTRANSFERASE"/>
    <property type="match status" value="1"/>
</dbReference>
<dbReference type="PANTHER" id="PTHR42866:SF2">
    <property type="entry name" value="3-DEOXY-MANNO-OCTULOSONATE CYTIDYLYLTRANSFERASE, MITOCHONDRIAL"/>
    <property type="match status" value="1"/>
</dbReference>
<dbReference type="Pfam" id="PF02348">
    <property type="entry name" value="CTP_transf_3"/>
    <property type="match status" value="1"/>
</dbReference>
<dbReference type="SUPFAM" id="SSF53448">
    <property type="entry name" value="Nucleotide-diphospho-sugar transferases"/>
    <property type="match status" value="1"/>
</dbReference>
<organism>
    <name type="scientific">Vibrio parahaemolyticus serotype O3:K6 (strain RIMD 2210633)</name>
    <dbReference type="NCBI Taxonomy" id="223926"/>
    <lineage>
        <taxon>Bacteria</taxon>
        <taxon>Pseudomonadati</taxon>
        <taxon>Pseudomonadota</taxon>
        <taxon>Gammaproteobacteria</taxon>
        <taxon>Vibrionales</taxon>
        <taxon>Vibrionaceae</taxon>
        <taxon>Vibrio</taxon>
    </lineage>
</organism>